<comment type="function">
    <text evidence="1">Required to facilitate the formation of correct disulfide bonds in some periplasmic proteins and for the assembly of the periplasmic c-type cytochromes. Acts by transferring electrons from cytoplasmic thioredoxin to the periplasm. This transfer involves a cascade of disulfide bond formation and reduction steps.</text>
</comment>
<comment type="catalytic activity">
    <reaction evidence="1">
        <text>[protein]-dithiol + NAD(+) = [protein]-disulfide + NADH + H(+)</text>
        <dbReference type="Rhea" id="RHEA:18749"/>
        <dbReference type="Rhea" id="RHEA-COMP:10593"/>
        <dbReference type="Rhea" id="RHEA-COMP:10594"/>
        <dbReference type="ChEBI" id="CHEBI:15378"/>
        <dbReference type="ChEBI" id="CHEBI:29950"/>
        <dbReference type="ChEBI" id="CHEBI:50058"/>
        <dbReference type="ChEBI" id="CHEBI:57540"/>
        <dbReference type="ChEBI" id="CHEBI:57945"/>
        <dbReference type="EC" id="1.8.1.8"/>
    </reaction>
</comment>
<comment type="catalytic activity">
    <reaction evidence="1">
        <text>[protein]-dithiol + NADP(+) = [protein]-disulfide + NADPH + H(+)</text>
        <dbReference type="Rhea" id="RHEA:18753"/>
        <dbReference type="Rhea" id="RHEA-COMP:10593"/>
        <dbReference type="Rhea" id="RHEA-COMP:10594"/>
        <dbReference type="ChEBI" id="CHEBI:15378"/>
        <dbReference type="ChEBI" id="CHEBI:29950"/>
        <dbReference type="ChEBI" id="CHEBI:50058"/>
        <dbReference type="ChEBI" id="CHEBI:57783"/>
        <dbReference type="ChEBI" id="CHEBI:58349"/>
        <dbReference type="EC" id="1.8.1.8"/>
    </reaction>
</comment>
<comment type="subcellular location">
    <subcellularLocation>
        <location evidence="1">Cell inner membrane</location>
        <topology evidence="1">Multi-pass membrane protein</topology>
    </subcellularLocation>
</comment>
<comment type="similarity">
    <text evidence="1">Belongs to the thioredoxin family. DsbD subfamily.</text>
</comment>
<feature type="signal peptide" evidence="1">
    <location>
        <begin position="1"/>
        <end position="23"/>
    </location>
</feature>
<feature type="chain" id="PRO_0000304385" description="Thiol:disulfide interchange protein DsbD">
    <location>
        <begin position="24"/>
        <end position="577"/>
    </location>
</feature>
<feature type="transmembrane region" description="Helical" evidence="1">
    <location>
        <begin position="182"/>
        <end position="202"/>
    </location>
</feature>
<feature type="transmembrane region" description="Helical" evidence="1">
    <location>
        <begin position="225"/>
        <end position="245"/>
    </location>
</feature>
<feature type="transmembrane region" description="Helical" evidence="1">
    <location>
        <begin position="255"/>
        <end position="275"/>
    </location>
</feature>
<feature type="transmembrane region" description="Helical" evidence="1">
    <location>
        <begin position="308"/>
        <end position="328"/>
    </location>
</feature>
<feature type="transmembrane region" description="Helical" evidence="1">
    <location>
        <begin position="338"/>
        <end position="358"/>
    </location>
</feature>
<feature type="transmembrane region" description="Helical" evidence="1">
    <location>
        <begin position="369"/>
        <end position="389"/>
    </location>
</feature>
<feature type="transmembrane region" description="Helical" evidence="1">
    <location>
        <begin position="396"/>
        <end position="416"/>
    </location>
</feature>
<feature type="domain" description="Thioredoxin" evidence="1">
    <location>
        <begin position="437"/>
        <end position="577"/>
    </location>
</feature>
<feature type="disulfide bond" description="Redox-active" evidence="1">
    <location>
        <begin position="131"/>
        <end position="137"/>
    </location>
</feature>
<feature type="disulfide bond" description="Redox-active" evidence="1">
    <location>
        <begin position="194"/>
        <end position="316"/>
    </location>
</feature>
<feature type="disulfide bond" description="Redox-active" evidence="1">
    <location>
        <begin position="492"/>
        <end position="495"/>
    </location>
</feature>
<protein>
    <recommendedName>
        <fullName evidence="1">Thiol:disulfide interchange protein DsbD</fullName>
        <ecNumber evidence="1">1.8.1.8</ecNumber>
    </recommendedName>
    <alternativeName>
        <fullName evidence="1">Protein-disulfide reductase</fullName>
        <shortName evidence="1">Disulfide reductase</shortName>
    </alternativeName>
</protein>
<sequence>MAQRIFTLIFLLWTAVGTPQVAASSFGQKLFGNSTTSRFLPVDGAFAFEFQQQGNQLNLRWDIHPDYYLYRAQIKIEGNGATLGKVELPQGESHNDEFFGQVFILRDRLALAVPIEQAESGATVKVTYQGCADAGFCYPPETRTVPLSQVLATANTDSPINTLSGQTAPPQTTPMPFSPWWALLIGIGVAFTPCVLPMYPLIASLVLGRKEQLTPRRTLLLSMTYVQGMALTYTLLGLIVAAAGLRFQAALQHPYILIGLSVMFIALALSMFGLYTLQLPSSVQTRLTEWSNRQQGGSVTGVFCMGALAGLICSPCTTAPLSAILLYIAQSGNMLAGGGTLYLYALGMGLPLILVTLFGNKLLPRSGPWMQYVKEAFGFIILALPVFLLERILGEAWGIRLWSALGIAFFGWALMLTLSSKKGWMRGVQLLLLAGVVISAKPLQDWVFPPTGTAQTHTSALNFAPVANIADLNSALAKSPQPVMLDLYADWCVACKEFEKYTFSDPAVQNHLSRITLLQADVTANREEQNALLKKLQVLGLPTIVFFDTQGKEIPGSRVTGFMNAEQFQAHLQKFSP</sequence>
<organism>
    <name type="scientific">Pectobacterium atrosepticum (strain SCRI 1043 / ATCC BAA-672)</name>
    <name type="common">Erwinia carotovora subsp. atroseptica</name>
    <dbReference type="NCBI Taxonomy" id="218491"/>
    <lineage>
        <taxon>Bacteria</taxon>
        <taxon>Pseudomonadati</taxon>
        <taxon>Pseudomonadota</taxon>
        <taxon>Gammaproteobacteria</taxon>
        <taxon>Enterobacterales</taxon>
        <taxon>Pectobacteriaceae</taxon>
        <taxon>Pectobacterium</taxon>
    </lineage>
</organism>
<evidence type="ECO:0000255" key="1">
    <source>
        <dbReference type="HAMAP-Rule" id="MF_00399"/>
    </source>
</evidence>
<name>DSBD_PECAS</name>
<accession>Q6D9J6</accession>
<keyword id="KW-0997">Cell inner membrane</keyword>
<keyword id="KW-1003">Cell membrane</keyword>
<keyword id="KW-0201">Cytochrome c-type biogenesis</keyword>
<keyword id="KW-1015">Disulfide bond</keyword>
<keyword id="KW-0249">Electron transport</keyword>
<keyword id="KW-0472">Membrane</keyword>
<keyword id="KW-0520">NAD</keyword>
<keyword id="KW-0560">Oxidoreductase</keyword>
<keyword id="KW-0676">Redox-active center</keyword>
<keyword id="KW-1185">Reference proteome</keyword>
<keyword id="KW-0732">Signal</keyword>
<keyword id="KW-0812">Transmembrane</keyword>
<keyword id="KW-1133">Transmembrane helix</keyword>
<keyword id="KW-0813">Transport</keyword>
<proteinExistence type="inferred from homology"/>
<gene>
    <name evidence="1" type="primary">dsbD</name>
    <name type="ordered locus">ECA0618</name>
</gene>
<dbReference type="EC" id="1.8.1.8" evidence="1"/>
<dbReference type="EMBL" id="BX950851">
    <property type="protein sequence ID" value="CAG73534.1"/>
    <property type="molecule type" value="Genomic_DNA"/>
</dbReference>
<dbReference type="RefSeq" id="WP_011092237.1">
    <property type="nucleotide sequence ID" value="NC_004547.2"/>
</dbReference>
<dbReference type="SMR" id="Q6D9J6"/>
<dbReference type="STRING" id="218491.ECA0618"/>
<dbReference type="KEGG" id="eca:ECA0618"/>
<dbReference type="PATRIC" id="fig|218491.5.peg.614"/>
<dbReference type="eggNOG" id="COG4232">
    <property type="taxonomic scope" value="Bacteria"/>
</dbReference>
<dbReference type="HOGENOM" id="CLU_014657_3_0_6"/>
<dbReference type="OrthoDB" id="9811036at2"/>
<dbReference type="Proteomes" id="UP000007966">
    <property type="component" value="Chromosome"/>
</dbReference>
<dbReference type="GO" id="GO:0005886">
    <property type="term" value="C:plasma membrane"/>
    <property type="evidence" value="ECO:0007669"/>
    <property type="project" value="UniProtKB-SubCell"/>
</dbReference>
<dbReference type="GO" id="GO:0009055">
    <property type="term" value="F:electron transfer activity"/>
    <property type="evidence" value="ECO:0007669"/>
    <property type="project" value="UniProtKB-UniRule"/>
</dbReference>
<dbReference type="GO" id="GO:0047134">
    <property type="term" value="F:protein-disulfide reductase [NAD(P)H] activity"/>
    <property type="evidence" value="ECO:0007669"/>
    <property type="project" value="UniProtKB-UniRule"/>
</dbReference>
<dbReference type="GO" id="GO:0045454">
    <property type="term" value="P:cell redox homeostasis"/>
    <property type="evidence" value="ECO:0007669"/>
    <property type="project" value="TreeGrafter"/>
</dbReference>
<dbReference type="GO" id="GO:0017004">
    <property type="term" value="P:cytochrome complex assembly"/>
    <property type="evidence" value="ECO:0007669"/>
    <property type="project" value="UniProtKB-UniRule"/>
</dbReference>
<dbReference type="CDD" id="cd02953">
    <property type="entry name" value="DsbDgamma"/>
    <property type="match status" value="1"/>
</dbReference>
<dbReference type="FunFam" id="3.40.30.10:FF:000116">
    <property type="entry name" value="Thiol:disulfide interchange protein DsbD"/>
    <property type="match status" value="1"/>
</dbReference>
<dbReference type="Gene3D" id="3.40.30.10">
    <property type="entry name" value="Glutaredoxin"/>
    <property type="match status" value="1"/>
</dbReference>
<dbReference type="Gene3D" id="2.60.40.1250">
    <property type="entry name" value="Thiol:disulfide interchange protein DsbD, N-terminal domain"/>
    <property type="match status" value="1"/>
</dbReference>
<dbReference type="HAMAP" id="MF_00399">
    <property type="entry name" value="DbsD"/>
    <property type="match status" value="1"/>
</dbReference>
<dbReference type="InterPro" id="IPR003834">
    <property type="entry name" value="Cyt_c_assmbl_TM_dom"/>
</dbReference>
<dbReference type="InterPro" id="IPR035671">
    <property type="entry name" value="DsbD_gamma"/>
</dbReference>
<dbReference type="InterPro" id="IPR028250">
    <property type="entry name" value="DsbDN"/>
</dbReference>
<dbReference type="InterPro" id="IPR036929">
    <property type="entry name" value="DsbDN_sf"/>
</dbReference>
<dbReference type="InterPro" id="IPR022910">
    <property type="entry name" value="Thiol_diS_interchange_DbsD"/>
</dbReference>
<dbReference type="InterPro" id="IPR012336">
    <property type="entry name" value="Thioredoxin-like_fold"/>
</dbReference>
<dbReference type="InterPro" id="IPR036249">
    <property type="entry name" value="Thioredoxin-like_sf"/>
</dbReference>
<dbReference type="InterPro" id="IPR017937">
    <property type="entry name" value="Thioredoxin_CS"/>
</dbReference>
<dbReference type="InterPro" id="IPR013766">
    <property type="entry name" value="Thioredoxin_domain"/>
</dbReference>
<dbReference type="NCBIfam" id="NF001419">
    <property type="entry name" value="PRK00293.1"/>
    <property type="match status" value="1"/>
</dbReference>
<dbReference type="PANTHER" id="PTHR32234">
    <property type="entry name" value="THIOL:DISULFIDE INTERCHANGE PROTEIN DSBD"/>
    <property type="match status" value="1"/>
</dbReference>
<dbReference type="PANTHER" id="PTHR32234:SF0">
    <property type="entry name" value="THIOL:DISULFIDE INTERCHANGE PROTEIN DSBD"/>
    <property type="match status" value="1"/>
</dbReference>
<dbReference type="Pfam" id="PF11412">
    <property type="entry name" value="DsbD_N"/>
    <property type="match status" value="1"/>
</dbReference>
<dbReference type="Pfam" id="PF02683">
    <property type="entry name" value="DsbD_TM"/>
    <property type="match status" value="1"/>
</dbReference>
<dbReference type="Pfam" id="PF13098">
    <property type="entry name" value="Thioredoxin_2"/>
    <property type="match status" value="1"/>
</dbReference>
<dbReference type="SUPFAM" id="SSF74863">
    <property type="entry name" value="Thiol:disulfide interchange protein DsbD, N-terminal domain (DsbD-alpha)"/>
    <property type="match status" value="1"/>
</dbReference>
<dbReference type="SUPFAM" id="SSF52833">
    <property type="entry name" value="Thioredoxin-like"/>
    <property type="match status" value="1"/>
</dbReference>
<dbReference type="PROSITE" id="PS00194">
    <property type="entry name" value="THIOREDOXIN_1"/>
    <property type="match status" value="1"/>
</dbReference>
<dbReference type="PROSITE" id="PS51352">
    <property type="entry name" value="THIOREDOXIN_2"/>
    <property type="match status" value="1"/>
</dbReference>
<reference key="1">
    <citation type="journal article" date="2004" name="Proc. Natl. Acad. Sci. U.S.A.">
        <title>Genome sequence of the enterobacterial phytopathogen Erwinia carotovora subsp. atroseptica and characterization of virulence factors.</title>
        <authorList>
            <person name="Bell K.S."/>
            <person name="Sebaihia M."/>
            <person name="Pritchard L."/>
            <person name="Holden M.T.G."/>
            <person name="Hyman L.J."/>
            <person name="Holeva M.C."/>
            <person name="Thomson N.R."/>
            <person name="Bentley S.D."/>
            <person name="Churcher L.J.C."/>
            <person name="Mungall K."/>
            <person name="Atkin R."/>
            <person name="Bason N."/>
            <person name="Brooks K."/>
            <person name="Chillingworth T."/>
            <person name="Clark K."/>
            <person name="Doggett J."/>
            <person name="Fraser A."/>
            <person name="Hance Z."/>
            <person name="Hauser H."/>
            <person name="Jagels K."/>
            <person name="Moule S."/>
            <person name="Norbertczak H."/>
            <person name="Ormond D."/>
            <person name="Price C."/>
            <person name="Quail M.A."/>
            <person name="Sanders M."/>
            <person name="Walker D."/>
            <person name="Whitehead S."/>
            <person name="Salmond G.P.C."/>
            <person name="Birch P.R.J."/>
            <person name="Parkhill J."/>
            <person name="Toth I.K."/>
        </authorList>
    </citation>
    <scope>NUCLEOTIDE SEQUENCE [LARGE SCALE GENOMIC DNA]</scope>
    <source>
        <strain>SCRI 1043 / ATCC BAA-672</strain>
    </source>
</reference>